<evidence type="ECO:0000250" key="1">
    <source>
        <dbReference type="UniProtKB" id="P14842"/>
    </source>
</evidence>
<evidence type="ECO:0000250" key="2">
    <source>
        <dbReference type="UniProtKB" id="P28223"/>
    </source>
</evidence>
<evidence type="ECO:0000250" key="3">
    <source>
        <dbReference type="UniProtKB" id="P41595"/>
    </source>
</evidence>
<evidence type="ECO:0000255" key="4"/>
<evidence type="ECO:0000255" key="5">
    <source>
        <dbReference type="PROSITE-ProRule" id="PRU00521"/>
    </source>
</evidence>
<evidence type="ECO:0000269" key="6">
    <source>
    </source>
</evidence>
<evidence type="ECO:0000269" key="7">
    <source>
    </source>
</evidence>
<evidence type="ECO:0000269" key="8">
    <source>
    </source>
</evidence>
<evidence type="ECO:0000269" key="9">
    <source>
    </source>
</evidence>
<evidence type="ECO:0000269" key="10">
    <source>
    </source>
</evidence>
<evidence type="ECO:0000269" key="11">
    <source>
    </source>
</evidence>
<evidence type="ECO:0000269" key="12">
    <source>
    </source>
</evidence>
<evidence type="ECO:0000305" key="13"/>
<sequence>MEILCEDNISLSSIPNSLMQLGDDSRLYPNDFNSRDANTSEASNWTIDAENRTNLSCEGYLPPTCLSILHLQEKNWSALLTTVVIILTIAGNILVIMAVSLEKKLQNATNYFLMSLAIADMLLGFLVMPVSMLTILYGYRWPLPSKLCAVWIYLDVLFSTASIMHLCAISLDRYVAIQNPIHHSRFNSRTKAFLKIIAVWTISVGISMPIPVFGLQDDSKVFKEGSCLLADDNFVLIGSFVAFFIPLTIMVITYFLTIKSLQKEATLCVSDLSTRAKLSSFSFLPQSSLSSEKLFQRSIHREPGSYAGRRTMQSISNEQKACKVLGIVFFLFVVMWCPFFITNIMAVICKESCNENVIGALLNVFVWIGYLSSAVNPLVYTLFNKTYRSAFSRYIQCQYKENRKPLQLILVNTIPTLAYKSSQLQVGQKKNSQEDAEPTANDCSMVTLGNQHSEEMCTDNIETVNEKVSCV</sequence>
<gene>
    <name type="primary">Htr2a</name>
    <name type="synonym">Htr2</name>
</gene>
<feature type="chain" id="PRO_0000068948" description="5-hydroxytryptamine receptor 2A">
    <location>
        <begin position="1"/>
        <end position="471"/>
    </location>
</feature>
<feature type="topological domain" description="Extracellular" evidence="2">
    <location>
        <begin position="1"/>
        <end position="80"/>
    </location>
</feature>
<feature type="transmembrane region" description="Helical; Name=1" evidence="2">
    <location>
        <begin position="81"/>
        <end position="97"/>
    </location>
</feature>
<feature type="topological domain" description="Cytoplasmic" evidence="2">
    <location>
        <begin position="98"/>
        <end position="111"/>
    </location>
</feature>
<feature type="transmembrane region" description="Helical; Name=2" evidence="2">
    <location>
        <begin position="112"/>
        <end position="137"/>
    </location>
</feature>
<feature type="topological domain" description="Extracellular" evidence="2">
    <location>
        <begin position="138"/>
        <end position="146"/>
    </location>
</feature>
<feature type="transmembrane region" description="Helical; Name=3" evidence="2">
    <location>
        <begin position="147"/>
        <end position="171"/>
    </location>
</feature>
<feature type="topological domain" description="Cytoplasmic" evidence="2">
    <location>
        <begin position="172"/>
        <end position="191"/>
    </location>
</feature>
<feature type="transmembrane region" description="Helical; Name=4" evidence="2">
    <location>
        <begin position="192"/>
        <end position="215"/>
    </location>
</feature>
<feature type="topological domain" description="Extracellular" evidence="2">
    <location>
        <begin position="216"/>
        <end position="232"/>
    </location>
</feature>
<feature type="transmembrane region" description="Helical; Name=5" evidence="2">
    <location>
        <begin position="233"/>
        <end position="258"/>
    </location>
</feature>
<feature type="topological domain" description="Cytoplasmic" evidence="2">
    <location>
        <begin position="259"/>
        <end position="322"/>
    </location>
</feature>
<feature type="transmembrane region" description="Helical; Name=6" evidence="2">
    <location>
        <begin position="323"/>
        <end position="348"/>
    </location>
</feature>
<feature type="topological domain" description="Extracellular" evidence="2">
    <location>
        <begin position="349"/>
        <end position="356"/>
    </location>
</feature>
<feature type="transmembrane region" description="Helical; Name=7" evidence="2">
    <location>
        <begin position="357"/>
        <end position="382"/>
    </location>
</feature>
<feature type="topological domain" description="Cytoplasmic" evidence="2">
    <location>
        <begin position="383"/>
        <end position="471"/>
    </location>
</feature>
<feature type="short sequence motif" description="DRY motif; important for ligand-induced conformation changes" evidence="3">
    <location>
        <begin position="172"/>
        <end position="174"/>
    </location>
</feature>
<feature type="short sequence motif" description="NPxxY motif; important for ligand-induced conformation changes and signaling" evidence="3">
    <location>
        <begin position="376"/>
        <end position="380"/>
    </location>
</feature>
<feature type="short sequence motif" description="PDZ-binding" evidence="2">
    <location>
        <begin position="469"/>
        <end position="471"/>
    </location>
</feature>
<feature type="binding site" evidence="2">
    <location>
        <position position="155"/>
    </location>
    <ligand>
        <name>serotonin</name>
        <dbReference type="ChEBI" id="CHEBI:350546"/>
    </ligand>
</feature>
<feature type="binding site" evidence="2">
    <location>
        <position position="343"/>
    </location>
    <ligand>
        <name>serotonin</name>
        <dbReference type="ChEBI" id="CHEBI:350546"/>
    </ligand>
</feature>
<feature type="site" description="Hydrophobic barrier that decreases the speed of ligand binding and dissociation" evidence="2">
    <location>
        <position position="229"/>
    </location>
</feature>
<feature type="modified residue" description="Phosphoserine" evidence="2">
    <location>
        <position position="280"/>
    </location>
</feature>
<feature type="glycosylation site" description="N-linked (GlcNAc...) asparagine" evidence="4">
    <location>
        <position position="8"/>
    </location>
</feature>
<feature type="glycosylation site" description="N-linked (GlcNAc...) asparagine" evidence="4">
    <location>
        <position position="38"/>
    </location>
</feature>
<feature type="glycosylation site" description="N-linked (GlcNAc...) asparagine" evidence="4">
    <location>
        <position position="44"/>
    </location>
</feature>
<feature type="glycosylation site" description="N-linked (GlcNAc...) asparagine" evidence="4">
    <location>
        <position position="51"/>
    </location>
</feature>
<feature type="glycosylation site" description="N-linked (GlcNAc...) asparagine" evidence="4">
    <location>
        <position position="54"/>
    </location>
</feature>
<feature type="disulfide bond" evidence="5">
    <location>
        <begin position="148"/>
        <end position="227"/>
    </location>
</feature>
<feature type="disulfide bond" evidence="5">
    <location>
        <begin position="349"/>
        <end position="353"/>
    </location>
</feature>
<reference key="1">
    <citation type="journal article" date="1992" name="J. Neurosci. Res.">
        <title>Gene structure and expression of the mouse 5-HT2 receptor.</title>
        <authorList>
            <person name="Yang W."/>
            <person name="Chen K."/>
            <person name="Lan N.C."/>
            <person name="Gallaher T.K."/>
            <person name="Shih J.C."/>
        </authorList>
    </citation>
    <scope>NUCLEOTIDE SEQUENCE [MRNA]</scope>
    <source>
        <tissue>Brain</tissue>
    </source>
</reference>
<reference key="2">
    <citation type="journal article" date="2002" name="Am. J. Physiol.">
        <title>5-HT(2A) receptors: location and functional analysis in intestines of wild-type and 5-HT(2A) knockout mice.</title>
        <authorList>
            <person name="Fiorica-Howells E."/>
            <person name="Hen R."/>
            <person name="Gingrich J."/>
            <person name="Li Z."/>
            <person name="Gershon M.D."/>
        </authorList>
    </citation>
    <scope>DISRUPTION PHENOTYPE</scope>
    <scope>FUNCTION</scope>
    <scope>SUBCELLULAR LOCATION</scope>
    <scope>TISSUE SPECIFICITY</scope>
</reference>
<reference key="3">
    <citation type="journal article" date="2004" name="J. Biol. Chem.">
        <title>The serotonin 5-HT2A and 5-HT2C receptors interact with specific sets of PDZ proteins.</title>
        <authorList>
            <person name="Becamel C."/>
            <person name="Gavarini S."/>
            <person name="Chanrion B."/>
            <person name="Alonso G."/>
            <person name="Galeotti N."/>
            <person name="Dumuis A."/>
            <person name="Bockaert J."/>
            <person name="Marin P."/>
        </authorList>
    </citation>
    <scope>SUBCELLULAR LOCATION</scope>
</reference>
<reference key="4">
    <citation type="journal article" date="2006" name="Science">
        <title>Cortical 5-HT2A receptor signaling modulates anxiety-like behaviors in mice.</title>
        <authorList>
            <person name="Weisstaub N.V."/>
            <person name="Zhou M."/>
            <person name="Lira A."/>
            <person name="Lambe E."/>
            <person name="Gonzalez-Maeso J."/>
            <person name="Hornung J.P."/>
            <person name="Sibille E."/>
            <person name="Underwood M."/>
            <person name="Itohara S."/>
            <person name="Dauer W.T."/>
            <person name="Ansorge M.S."/>
            <person name="Morelli E."/>
            <person name="Mann J.J."/>
            <person name="Toth M."/>
            <person name="Aghajanian G."/>
            <person name="Sealfon S.C."/>
            <person name="Hen R."/>
            <person name="Gingrich J.A."/>
        </authorList>
    </citation>
    <scope>DISRUPTION PHENOTYPE</scope>
    <scope>FUNCTION</scope>
</reference>
<reference key="5">
    <citation type="journal article" date="2007" name="Neuron">
        <title>Hallucinogens recruit specific cortical 5-HT(2A) receptor-mediated signaling pathways to affect behavior.</title>
        <authorList>
            <person name="Gonzalez-Maeso J."/>
            <person name="Weisstaub N.V."/>
            <person name="Zhou M."/>
            <person name="Chan P."/>
            <person name="Ivic L."/>
            <person name="Ang R."/>
            <person name="Lira A."/>
            <person name="Bradley-Moore M."/>
            <person name="Ge Y."/>
            <person name="Zhou Q."/>
            <person name="Sealfon S.C."/>
            <person name="Gingrich J.A."/>
        </authorList>
    </citation>
    <scope>DISRUPTION PHENOTYPE</scope>
    <scope>FUNCTION</scope>
</reference>
<reference key="6">
    <citation type="journal article" date="2008" name="Nature">
        <title>Identification of a serotonin/glutamate receptor complex implicated in psychosis.</title>
        <authorList>
            <person name="Gonzalez-Maeso J."/>
            <person name="Ang R.L."/>
            <person name="Yuen T."/>
            <person name="Chan P."/>
            <person name="Weisstaub N.V."/>
            <person name="Lopez-Gimenez J.F."/>
            <person name="Zhou M."/>
            <person name="Okawa Y."/>
            <person name="Callado L.F."/>
            <person name="Milligan G."/>
            <person name="Gingrich J.A."/>
            <person name="Filizola M."/>
            <person name="Meana J.J."/>
            <person name="Sealfon S.C."/>
        </authorList>
    </citation>
    <scope>INTERACTION WITH GRM2</scope>
    <scope>FUNCTION</scope>
    <scope>TISSUE SPECIFICITY</scope>
    <scope>SUBCELLULAR LOCATION</scope>
</reference>
<reference key="7">
    <citation type="journal article" date="2011" name="Neuropharmacology">
        <title>Functional crosstalk and heteromerization of serotonin 5-HT2A and dopamine D2 receptors.</title>
        <authorList>
            <person name="Albizu L."/>
            <person name="Holloway T."/>
            <person name="Gonzalez-Maeso J."/>
            <person name="Sealfon S.C."/>
        </authorList>
    </citation>
    <scope>INTERACTION WITH DRD2</scope>
    <scope>FUNCTION</scope>
    <scope>SUBCELLULAR LOCATION</scope>
</reference>
<reference key="8">
    <citation type="journal article" date="2012" name="Exp. Diabetes Res.">
        <title>5HT(2A) and 5HT(2B) receptors contribute to serotonin-induced vascular dysfunction in diabetes.</title>
        <authorList>
            <person name="Nelson P.M."/>
            <person name="Harrod J.S."/>
            <person name="Lamping K.G."/>
        </authorList>
    </citation>
    <scope>FUNCTION</scope>
</reference>
<reference key="9">
    <citation type="journal article" date="2012" name="J. Biol. Chem.">
        <title>Identification of three residues essential for 5-hydroxytryptamine 2A-metabotropic glutamate 2 (5-HT2A.mGlu2) receptor heteromerization and its psychoactive behavioral function.</title>
        <authorList>
            <person name="Moreno J.L."/>
            <person name="Muguruza C."/>
            <person name="Umali A."/>
            <person name="Mortillo S."/>
            <person name="Holloway T."/>
            <person name="Pilar-Cuellar F."/>
            <person name="Mocci G."/>
            <person name="Seto J."/>
            <person name="Callado L.F."/>
            <person name="Neve R.L."/>
            <person name="Milligan G."/>
            <person name="Sealfon S.C."/>
            <person name="Lopez-Gimenez J.F."/>
            <person name="Meana J.J."/>
            <person name="Benson D.L."/>
            <person name="Gonzalez-Maeso J."/>
        </authorList>
    </citation>
    <scope>FUNCTION</scope>
    <scope>TISSUE SPECIFICITY</scope>
    <scope>SUBCELLULAR LOCATION</scope>
</reference>
<dbReference type="EMBL" id="S49542">
    <property type="protein sequence ID" value="AAB24369.1"/>
    <property type="molecule type" value="mRNA"/>
</dbReference>
<dbReference type="CCDS" id="CCDS27275.1"/>
<dbReference type="PIR" id="S40689">
    <property type="entry name" value="S40689"/>
</dbReference>
<dbReference type="RefSeq" id="NP_766400.1">
    <property type="nucleotide sequence ID" value="NM_172812.3"/>
</dbReference>
<dbReference type="SMR" id="P35363"/>
<dbReference type="BioGRID" id="200472">
    <property type="interactions" value="1"/>
</dbReference>
<dbReference type="CORUM" id="P35363"/>
<dbReference type="FunCoup" id="P35363">
    <property type="interactions" value="785"/>
</dbReference>
<dbReference type="IntAct" id="P35363">
    <property type="interactions" value="1"/>
</dbReference>
<dbReference type="STRING" id="10090.ENSMUSP00000047774"/>
<dbReference type="BindingDB" id="P35363"/>
<dbReference type="ChEMBL" id="CHEMBL5377"/>
<dbReference type="DrugCentral" id="P35363"/>
<dbReference type="GlyCosmos" id="P35363">
    <property type="glycosylation" value="5 sites, No reported glycans"/>
</dbReference>
<dbReference type="GlyGen" id="P35363">
    <property type="glycosylation" value="5 sites, 1 N-linked glycan (1 site)"/>
</dbReference>
<dbReference type="iPTMnet" id="P35363"/>
<dbReference type="PhosphoSitePlus" id="P35363"/>
<dbReference type="SwissPalm" id="P35363"/>
<dbReference type="PaxDb" id="10090-ENSMUSP00000047774"/>
<dbReference type="ProteomicsDB" id="285689"/>
<dbReference type="Antibodypedia" id="2927">
    <property type="antibodies" value="356 antibodies from 34 providers"/>
</dbReference>
<dbReference type="DNASU" id="15558"/>
<dbReference type="Ensembl" id="ENSMUST00000036653.5">
    <property type="protein sequence ID" value="ENSMUSP00000047774.4"/>
    <property type="gene ID" value="ENSMUSG00000034997.6"/>
</dbReference>
<dbReference type="GeneID" id="15558"/>
<dbReference type="KEGG" id="mmu:15558"/>
<dbReference type="UCSC" id="uc007uqc.1">
    <property type="organism name" value="mouse"/>
</dbReference>
<dbReference type="AGR" id="MGI:109521"/>
<dbReference type="CTD" id="3356"/>
<dbReference type="MGI" id="MGI:109521">
    <property type="gene designation" value="Htr2a"/>
</dbReference>
<dbReference type="VEuPathDB" id="HostDB:ENSMUSG00000034997"/>
<dbReference type="eggNOG" id="KOG3656">
    <property type="taxonomic scope" value="Eukaryota"/>
</dbReference>
<dbReference type="GeneTree" id="ENSGT01050000244937"/>
<dbReference type="HOGENOM" id="CLU_009579_11_3_1"/>
<dbReference type="InParanoid" id="P35363"/>
<dbReference type="OMA" id="MVTIGIH"/>
<dbReference type="OrthoDB" id="420518at2759"/>
<dbReference type="PhylomeDB" id="P35363"/>
<dbReference type="TreeFam" id="TF316350"/>
<dbReference type="Reactome" id="R-MMU-390666">
    <property type="pathway name" value="Serotonin receptors"/>
</dbReference>
<dbReference type="Reactome" id="R-MMU-416476">
    <property type="pathway name" value="G alpha (q) signalling events"/>
</dbReference>
<dbReference type="BioGRID-ORCS" id="15558">
    <property type="hits" value="1 hit in 79 CRISPR screens"/>
</dbReference>
<dbReference type="PRO" id="PR:P35363"/>
<dbReference type="Proteomes" id="UP000000589">
    <property type="component" value="Chromosome 14"/>
</dbReference>
<dbReference type="RNAct" id="P35363">
    <property type="molecule type" value="protein"/>
</dbReference>
<dbReference type="Bgee" id="ENSMUSG00000034997">
    <property type="expression patterns" value="Expressed in superior frontal gyrus and 35 other cell types or tissues"/>
</dbReference>
<dbReference type="ExpressionAtlas" id="P35363">
    <property type="expression patterns" value="baseline and differential"/>
</dbReference>
<dbReference type="GO" id="GO:0030424">
    <property type="term" value="C:axon"/>
    <property type="evidence" value="ECO:0007669"/>
    <property type="project" value="UniProtKB-SubCell"/>
</dbReference>
<dbReference type="GO" id="GO:0005901">
    <property type="term" value="C:caveola"/>
    <property type="evidence" value="ECO:0007669"/>
    <property type="project" value="UniProtKB-SubCell"/>
</dbReference>
<dbReference type="GO" id="GO:0070852">
    <property type="term" value="C:cell body fiber"/>
    <property type="evidence" value="ECO:0007669"/>
    <property type="project" value="Ensembl"/>
</dbReference>
<dbReference type="GO" id="GO:0031410">
    <property type="term" value="C:cytoplasmic vesicle"/>
    <property type="evidence" value="ECO:0007669"/>
    <property type="project" value="UniProtKB-KW"/>
</dbReference>
<dbReference type="GO" id="GO:0043198">
    <property type="term" value="C:dendritic shaft"/>
    <property type="evidence" value="ECO:0007669"/>
    <property type="project" value="Ensembl"/>
</dbReference>
<dbReference type="GO" id="GO:0098666">
    <property type="term" value="C:G protein-coupled serotonin receptor complex"/>
    <property type="evidence" value="ECO:0007669"/>
    <property type="project" value="Ensembl"/>
</dbReference>
<dbReference type="GO" id="GO:0098978">
    <property type="term" value="C:glutamatergic synapse"/>
    <property type="evidence" value="ECO:0007669"/>
    <property type="project" value="Ensembl"/>
</dbReference>
<dbReference type="GO" id="GO:0005883">
    <property type="term" value="C:neurofilament"/>
    <property type="evidence" value="ECO:0007669"/>
    <property type="project" value="Ensembl"/>
</dbReference>
<dbReference type="GO" id="GO:0043025">
    <property type="term" value="C:neuronal cell body"/>
    <property type="evidence" value="ECO:0007669"/>
    <property type="project" value="Ensembl"/>
</dbReference>
<dbReference type="GO" id="GO:0045211">
    <property type="term" value="C:postsynaptic membrane"/>
    <property type="evidence" value="ECO:0007669"/>
    <property type="project" value="Ensembl"/>
</dbReference>
<dbReference type="GO" id="GO:0042734">
    <property type="term" value="C:presynaptic membrane"/>
    <property type="evidence" value="ECO:0007669"/>
    <property type="project" value="Ensembl"/>
</dbReference>
<dbReference type="GO" id="GO:0071886">
    <property type="term" value="F:1-(4-iodo-2,5-dimethoxyphenyl)propan-2-amine binding"/>
    <property type="evidence" value="ECO:0007669"/>
    <property type="project" value="Ensembl"/>
</dbReference>
<dbReference type="GO" id="GO:0004993">
    <property type="term" value="F:G protein-coupled serotonin receptor activity"/>
    <property type="evidence" value="ECO:0000266"/>
    <property type="project" value="MGI"/>
</dbReference>
<dbReference type="GO" id="GO:0001587">
    <property type="term" value="F:Gq/11-coupled serotonin receptor activity"/>
    <property type="evidence" value="ECO:0007669"/>
    <property type="project" value="Ensembl"/>
</dbReference>
<dbReference type="GO" id="GO:0042802">
    <property type="term" value="F:identical protein binding"/>
    <property type="evidence" value="ECO:0007669"/>
    <property type="project" value="Ensembl"/>
</dbReference>
<dbReference type="GO" id="GO:0030296">
    <property type="term" value="F:protein tyrosine kinase activator activity"/>
    <property type="evidence" value="ECO:0000315"/>
    <property type="project" value="MGI"/>
</dbReference>
<dbReference type="GO" id="GO:0044877">
    <property type="term" value="F:protein-containing complex binding"/>
    <property type="evidence" value="ECO:0007669"/>
    <property type="project" value="Ensembl"/>
</dbReference>
<dbReference type="GO" id="GO:0051378">
    <property type="term" value="F:serotonin binding"/>
    <property type="evidence" value="ECO:0000266"/>
    <property type="project" value="MGI"/>
</dbReference>
<dbReference type="GO" id="GO:0099589">
    <property type="term" value="F:serotonin receptor activity"/>
    <property type="evidence" value="ECO:0007669"/>
    <property type="project" value="Ensembl"/>
</dbReference>
<dbReference type="GO" id="GO:0014824">
    <property type="term" value="P:artery smooth muscle contraction"/>
    <property type="evidence" value="ECO:0007669"/>
    <property type="project" value="Ensembl"/>
</dbReference>
<dbReference type="GO" id="GO:0048148">
    <property type="term" value="P:behavioral response to cocaine"/>
    <property type="evidence" value="ECO:0007669"/>
    <property type="project" value="Ensembl"/>
</dbReference>
<dbReference type="GO" id="GO:0050966">
    <property type="term" value="P:detection of mechanical stimulus involved in sensory perception of pain"/>
    <property type="evidence" value="ECO:0007669"/>
    <property type="project" value="Ensembl"/>
</dbReference>
<dbReference type="GO" id="GO:0050965">
    <property type="term" value="P:detection of temperature stimulus involved in sensory perception of pain"/>
    <property type="evidence" value="ECO:0007669"/>
    <property type="project" value="Ensembl"/>
</dbReference>
<dbReference type="GO" id="GO:0006096">
    <property type="term" value="P:glycolytic process"/>
    <property type="evidence" value="ECO:0000315"/>
    <property type="project" value="MGI"/>
</dbReference>
<dbReference type="GO" id="GO:0006874">
    <property type="term" value="P:intracellular calcium ion homeostasis"/>
    <property type="evidence" value="ECO:0007669"/>
    <property type="project" value="Ensembl"/>
</dbReference>
<dbReference type="GO" id="GO:0007613">
    <property type="term" value="P:memory"/>
    <property type="evidence" value="ECO:0007669"/>
    <property type="project" value="Ensembl"/>
</dbReference>
<dbReference type="GO" id="GO:0043267">
    <property type="term" value="P:negative regulation of potassium ion transport"/>
    <property type="evidence" value="ECO:0007669"/>
    <property type="project" value="Ensembl"/>
</dbReference>
<dbReference type="GO" id="GO:0051967">
    <property type="term" value="P:negative regulation of synaptic transmission, glutamatergic"/>
    <property type="evidence" value="ECO:0007669"/>
    <property type="project" value="Ensembl"/>
</dbReference>
<dbReference type="GO" id="GO:0007208">
    <property type="term" value="P:phospholipase C-activating serotonin receptor signaling pathway"/>
    <property type="evidence" value="ECO:0007669"/>
    <property type="project" value="Ensembl"/>
</dbReference>
<dbReference type="GO" id="GO:0008284">
    <property type="term" value="P:positive regulation of cell population proliferation"/>
    <property type="evidence" value="ECO:0007669"/>
    <property type="project" value="Ensembl"/>
</dbReference>
<dbReference type="GO" id="GO:0002720">
    <property type="term" value="P:positive regulation of cytokine production involved in immune response"/>
    <property type="evidence" value="ECO:0007669"/>
    <property type="project" value="Ensembl"/>
</dbReference>
<dbReference type="GO" id="GO:0007204">
    <property type="term" value="P:positive regulation of cytosolic calcium ion concentration"/>
    <property type="evidence" value="ECO:0007669"/>
    <property type="project" value="Ensembl"/>
</dbReference>
<dbReference type="GO" id="GO:2000573">
    <property type="term" value="P:positive regulation of DNA biosynthetic process"/>
    <property type="evidence" value="ECO:0007669"/>
    <property type="project" value="Ensembl"/>
</dbReference>
<dbReference type="GO" id="GO:0070374">
    <property type="term" value="P:positive regulation of ERK1 and ERK2 cascade"/>
    <property type="evidence" value="ECO:0007669"/>
    <property type="project" value="Ensembl"/>
</dbReference>
<dbReference type="GO" id="GO:1900119">
    <property type="term" value="P:positive regulation of execution phase of apoptosis"/>
    <property type="evidence" value="ECO:0007669"/>
    <property type="project" value="Ensembl"/>
</dbReference>
<dbReference type="GO" id="GO:0045600">
    <property type="term" value="P:positive regulation of fat cell differentiation"/>
    <property type="evidence" value="ECO:0000315"/>
    <property type="project" value="MGI"/>
</dbReference>
<dbReference type="GO" id="GO:0045821">
    <property type="term" value="P:positive regulation of glycolytic process"/>
    <property type="evidence" value="ECO:0000315"/>
    <property type="project" value="MGI"/>
</dbReference>
<dbReference type="GO" id="GO:0031652">
    <property type="term" value="P:positive regulation of heat generation"/>
    <property type="evidence" value="ECO:0007669"/>
    <property type="project" value="Ensembl"/>
</dbReference>
<dbReference type="GO" id="GO:0050729">
    <property type="term" value="P:positive regulation of inflammatory response"/>
    <property type="evidence" value="ECO:0007669"/>
    <property type="project" value="Ensembl"/>
</dbReference>
<dbReference type="GO" id="GO:0043525">
    <property type="term" value="P:positive regulation of neuron apoptotic process"/>
    <property type="evidence" value="ECO:0007669"/>
    <property type="project" value="Ensembl"/>
</dbReference>
<dbReference type="GO" id="GO:0010513">
    <property type="term" value="P:positive regulation of phosphatidylinositol biosynthetic process"/>
    <property type="evidence" value="ECO:0007669"/>
    <property type="project" value="Ensembl"/>
</dbReference>
<dbReference type="GO" id="GO:1901731">
    <property type="term" value="P:positive regulation of platelet aggregation"/>
    <property type="evidence" value="ECO:0007669"/>
    <property type="project" value="Ensembl"/>
</dbReference>
<dbReference type="GO" id="GO:0045907">
    <property type="term" value="P:positive regulation of vasoconstriction"/>
    <property type="evidence" value="ECO:0007669"/>
    <property type="project" value="Ensembl"/>
</dbReference>
<dbReference type="GO" id="GO:0099171">
    <property type="term" value="P:presynaptic modulation of chemical synaptic transmission"/>
    <property type="evidence" value="ECO:0007669"/>
    <property type="project" value="Ensembl"/>
</dbReference>
<dbReference type="GO" id="GO:0044380">
    <property type="term" value="P:protein localization to cytoskeleton"/>
    <property type="evidence" value="ECO:0000314"/>
    <property type="project" value="MGI"/>
</dbReference>
<dbReference type="GO" id="GO:0014059">
    <property type="term" value="P:regulation of dopamine secretion"/>
    <property type="evidence" value="ECO:0007669"/>
    <property type="project" value="Ensembl"/>
</dbReference>
<dbReference type="GO" id="GO:0051209">
    <property type="term" value="P:release of sequestered calcium ion into cytosol"/>
    <property type="evidence" value="ECO:0007669"/>
    <property type="project" value="Ensembl"/>
</dbReference>
<dbReference type="GO" id="GO:0009410">
    <property type="term" value="P:response to xenobiotic stimulus"/>
    <property type="evidence" value="ECO:0007669"/>
    <property type="project" value="Ensembl"/>
</dbReference>
<dbReference type="GO" id="GO:0046960">
    <property type="term" value="P:sensitization"/>
    <property type="evidence" value="ECO:0007669"/>
    <property type="project" value="Ensembl"/>
</dbReference>
<dbReference type="GO" id="GO:0001659">
    <property type="term" value="P:temperature homeostasis"/>
    <property type="evidence" value="ECO:0007669"/>
    <property type="project" value="Ensembl"/>
</dbReference>
<dbReference type="GO" id="GO:0014832">
    <property type="term" value="P:urinary bladder smooth muscle contraction"/>
    <property type="evidence" value="ECO:0007669"/>
    <property type="project" value="Ensembl"/>
</dbReference>
<dbReference type="CDD" id="cd15304">
    <property type="entry name" value="7tmA_5-HT2A"/>
    <property type="match status" value="1"/>
</dbReference>
<dbReference type="Gene3D" id="1.20.1070.10">
    <property type="entry name" value="Rhodopsin 7-helix transmembrane proteins"/>
    <property type="match status" value="1"/>
</dbReference>
<dbReference type="InterPro" id="IPR000455">
    <property type="entry name" value="5HT2A_rcpt"/>
</dbReference>
<dbReference type="InterPro" id="IPR002231">
    <property type="entry name" value="5HT_rcpt"/>
</dbReference>
<dbReference type="InterPro" id="IPR000276">
    <property type="entry name" value="GPCR_Rhodpsn"/>
</dbReference>
<dbReference type="InterPro" id="IPR017452">
    <property type="entry name" value="GPCR_Rhodpsn_7TM"/>
</dbReference>
<dbReference type="PANTHER" id="PTHR24247">
    <property type="entry name" value="5-HYDROXYTRYPTAMINE RECEPTOR"/>
    <property type="match status" value="1"/>
</dbReference>
<dbReference type="PANTHER" id="PTHR24247:SF30">
    <property type="entry name" value="5-HYDROXYTRYPTAMINE RECEPTOR 2A"/>
    <property type="match status" value="1"/>
</dbReference>
<dbReference type="Pfam" id="PF00001">
    <property type="entry name" value="7tm_1"/>
    <property type="match status" value="1"/>
</dbReference>
<dbReference type="PRINTS" id="PR00516">
    <property type="entry name" value="5HT2ARECEPTR"/>
</dbReference>
<dbReference type="PRINTS" id="PR01101">
    <property type="entry name" value="5HTRECEPTOR"/>
</dbReference>
<dbReference type="PRINTS" id="PR00237">
    <property type="entry name" value="GPCRRHODOPSN"/>
</dbReference>
<dbReference type="SMART" id="SM01381">
    <property type="entry name" value="7TM_GPCR_Srsx"/>
    <property type="match status" value="1"/>
</dbReference>
<dbReference type="SUPFAM" id="SSF81321">
    <property type="entry name" value="Family A G protein-coupled receptor-like"/>
    <property type="match status" value="1"/>
</dbReference>
<dbReference type="PROSITE" id="PS00237">
    <property type="entry name" value="G_PROTEIN_RECEP_F1_1"/>
    <property type="match status" value="1"/>
</dbReference>
<dbReference type="PROSITE" id="PS50262">
    <property type="entry name" value="G_PROTEIN_RECEP_F1_2"/>
    <property type="match status" value="1"/>
</dbReference>
<name>5HT2A_MOUSE</name>
<organism>
    <name type="scientific">Mus musculus</name>
    <name type="common">Mouse</name>
    <dbReference type="NCBI Taxonomy" id="10090"/>
    <lineage>
        <taxon>Eukaryota</taxon>
        <taxon>Metazoa</taxon>
        <taxon>Chordata</taxon>
        <taxon>Craniata</taxon>
        <taxon>Vertebrata</taxon>
        <taxon>Euteleostomi</taxon>
        <taxon>Mammalia</taxon>
        <taxon>Eutheria</taxon>
        <taxon>Euarchontoglires</taxon>
        <taxon>Glires</taxon>
        <taxon>Rodentia</taxon>
        <taxon>Myomorpha</taxon>
        <taxon>Muroidea</taxon>
        <taxon>Muridae</taxon>
        <taxon>Murinae</taxon>
        <taxon>Mus</taxon>
        <taxon>Mus</taxon>
    </lineage>
</organism>
<accession>P35363</accession>
<comment type="function">
    <text evidence="2 6 7 8 9 10 11 12">G-protein coupled receptor for 5-hydroxytryptamine (serotonin) (PubMed:11960784, PubMed:16873667, PubMed:17270739, PubMed:18297054, PubMed:21645528, PubMed:23129762, PubMed:23346101). Also functions as a receptor for various drugs and psychoactive substances, including mescaline, psilocybin, 1-(2,5-dimethoxy-4-iodophenyl)-2-aminopropane (DOI) and lysergic acid diethylamide (LSD) (By similarity). Ligand binding causes a conformation change that triggers signaling via guanine nucleotide-binding proteins (G proteins) and modulates the activity of downstream effectors (By similarity). HTR2A is coupled to G(q)/G(11) G alpha proteins and activates phospholipase C-beta, releasing diacylglycerol (DAG) and inositol 1,4,5-trisphosphate (IP3) second messengers that modulate the activity of phosphatidylinositol 3-kinase and promote the release of Ca(2+) ions from intracellular stores, respectively (By similarity). Beta-arrestin family members inhibit signaling via G proteins and mediate activation of alternative signaling pathways (PubMed:18297054). Affects neural activity, perception, cognition and mood (PubMed:18297054). Plays a role in the regulation of behavior, including responses to anxiogenic situations and psychoactive substances (PubMed:16873667, PubMed:17270739, PubMed:18297054, PubMed:23129762). Plays a role in intestinal smooth muscle contraction, and may play a role in arterial vasoconstriction (PubMed:11960784, PubMed:23346101).</text>
</comment>
<comment type="activity regulation">
    <text evidence="2">G-protein coupled receptor activity is regulated by lipids: oleamide increases HTR2A-mediated activity.</text>
</comment>
<comment type="subunit">
    <text evidence="2 9 10">Interacts (via C-terminus) with MPDZ and PATJ (By similarity). May interact (via C-terminus) with MPP3, PRDX6, DLG4, DLG1, CASK, APBA1 and MAGI2 (By similarity). Interacts with GRM2 and DRD2; this may affect signaling (PubMed:18297054, PubMed:21645528).</text>
</comment>
<comment type="subcellular location">
    <subcellularLocation>
        <location evidence="10">Cell membrane</location>
        <topology evidence="13">Multi-pass membrane protein</topology>
    </subcellularLocation>
    <subcellularLocation>
        <location evidence="6">Cell projection</location>
        <location evidence="6">Dendrite</location>
    </subcellularLocation>
    <subcellularLocation>
        <location evidence="1">Cell projection</location>
        <location evidence="1">Axon</location>
    </subcellularLocation>
    <subcellularLocation>
        <location evidence="6">Cytoplasmic vesicle</location>
    </subcellularLocation>
    <subcellularLocation>
        <location evidence="1">Membrane</location>
        <location evidence="1">Caveola</location>
    </subcellularLocation>
    <subcellularLocation>
        <location evidence="1">Presynapse</location>
    </subcellularLocation>
</comment>
<comment type="tissue specificity">
    <text evidence="6 9 11">Detected in neurons in brain cortex. Detected in adult intestine, especially in mucosal epithelium, longitudinal and circular layers of muscularis externa and myenteric plexuses. Highly expressed in Paneth cells, and detected at lower levels in enterocytes (at protein level). Detected in neurons in the brain cortex.</text>
</comment>
<comment type="domain">
    <text evidence="2">The PDZ domain-binding motif is involved in the interaction with PATJ, CASK, APBA1, DLG1 and DLG4.</text>
</comment>
<comment type="disruption phenotype">
    <text evidence="6 7 8">Mutant mice display increased exploratory behavior in open spaces and reduced anxiety-like behavior (PubMed:16873667). Mutant mice fail to show behavorial responses to psychoactive substances and hallucinogens, such as mescaline, psilocybin, 1-(2,5-dimethoxy-4-iodophenyl)-2-aminopropane (DOI), 1-(2,5-dimethoxy-4-bromophenyl)-2-aminopropane and lysergic acid diethylamide (LSD) (PubMed:17270739). Besides, the colon from mutant mice does not contract in response to 5-hydroxytryptamine (PubMed:11960784).</text>
</comment>
<comment type="similarity">
    <text evidence="5">Belongs to the G-protein coupled receptor 1 family.</text>
</comment>
<keyword id="KW-0085">Behavior</keyword>
<keyword id="KW-1003">Cell membrane</keyword>
<keyword id="KW-0966">Cell projection</keyword>
<keyword id="KW-0968">Cytoplasmic vesicle</keyword>
<keyword id="KW-1015">Disulfide bond</keyword>
<keyword id="KW-0297">G-protein coupled receptor</keyword>
<keyword id="KW-0325">Glycoprotein</keyword>
<keyword id="KW-0472">Membrane</keyword>
<keyword id="KW-0597">Phosphoprotein</keyword>
<keyword id="KW-0675">Receptor</keyword>
<keyword id="KW-1185">Reference proteome</keyword>
<keyword id="KW-0770">Synapse</keyword>
<keyword id="KW-0807">Transducer</keyword>
<keyword id="KW-0812">Transmembrane</keyword>
<keyword id="KW-1133">Transmembrane helix</keyword>
<protein>
    <recommendedName>
        <fullName>5-hydroxytryptamine receptor 2A</fullName>
        <shortName>5-HT-2</shortName>
        <shortName>5-HT-2A</shortName>
    </recommendedName>
    <alternativeName>
        <fullName>Serotonin receptor 2A</fullName>
    </alternativeName>
</protein>
<proteinExistence type="evidence at protein level"/>